<sequence length="498" mass="57739">MELKDQIKEENEQIAQRKLKLKKRREEGQAYPNDFKRDSLAADLHAVYDQFDSGALTAKAIRVKMAGRMMTRRIMGKASFAHIQDMKGRMQIYVTRDSLPQGVYSDFKSWDLGDIVGIEGELFKTKTEELSVKVDQIRLLTKALRPMPDKFHGLHDQEQRFRQRYLDLIVNESSRHLFQTRSQVIAQIRRFLDDRGYIEVETPMMHPLPGGAAARPFETHHNAMNMDLFLRIAPELYLKRLVVGGFEKVYEINRNFRNEGISTRHNPEFTMLEFYQAYATYEDMMMLTESMIRHLAEKIFGVMEIKYQGVRIDLNKPFPRLSLRDAILQFNPGITPDQIDHLETARELAHKYEIATPAHYGLGKIQTELFEKLVEEKLQQPIFITHFPKEVSPLSRANEENDFITDRFEFYVGGREIANGFSELNDPEDQAARFREQLKARNAGDLEAMSFDEDYITALEYGLPPTAGEGIGIDRLVMLFTDNASIRDVILFPLLRSK</sequence>
<organism>
    <name type="scientific">Coxiella burnetii (strain CbuG_Q212)</name>
    <name type="common">Coxiella burnetii (strain Q212)</name>
    <dbReference type="NCBI Taxonomy" id="434923"/>
    <lineage>
        <taxon>Bacteria</taxon>
        <taxon>Pseudomonadati</taxon>
        <taxon>Pseudomonadota</taxon>
        <taxon>Gammaproteobacteria</taxon>
        <taxon>Legionellales</taxon>
        <taxon>Coxiellaceae</taxon>
        <taxon>Coxiella</taxon>
    </lineage>
</organism>
<feature type="chain" id="PRO_1000101114" description="Lysine--tRNA ligase">
    <location>
        <begin position="1"/>
        <end position="498"/>
    </location>
</feature>
<feature type="binding site" evidence="1">
    <location>
        <position position="409"/>
    </location>
    <ligand>
        <name>Mg(2+)</name>
        <dbReference type="ChEBI" id="CHEBI:18420"/>
        <label>1</label>
    </ligand>
</feature>
<feature type="binding site" evidence="1">
    <location>
        <position position="416"/>
    </location>
    <ligand>
        <name>Mg(2+)</name>
        <dbReference type="ChEBI" id="CHEBI:18420"/>
        <label>1</label>
    </ligand>
</feature>
<feature type="binding site" evidence="1">
    <location>
        <position position="416"/>
    </location>
    <ligand>
        <name>Mg(2+)</name>
        <dbReference type="ChEBI" id="CHEBI:18420"/>
        <label>2</label>
    </ligand>
</feature>
<protein>
    <recommendedName>
        <fullName evidence="1">Lysine--tRNA ligase</fullName>
        <ecNumber evidence="1">6.1.1.6</ecNumber>
    </recommendedName>
    <alternativeName>
        <fullName evidence="1">Lysyl-tRNA synthetase</fullName>
        <shortName evidence="1">LysRS</shortName>
    </alternativeName>
</protein>
<name>SYK_COXB2</name>
<accession>B6J1P6</accession>
<comment type="catalytic activity">
    <reaction evidence="1">
        <text>tRNA(Lys) + L-lysine + ATP = L-lysyl-tRNA(Lys) + AMP + diphosphate</text>
        <dbReference type="Rhea" id="RHEA:20792"/>
        <dbReference type="Rhea" id="RHEA-COMP:9696"/>
        <dbReference type="Rhea" id="RHEA-COMP:9697"/>
        <dbReference type="ChEBI" id="CHEBI:30616"/>
        <dbReference type="ChEBI" id="CHEBI:32551"/>
        <dbReference type="ChEBI" id="CHEBI:33019"/>
        <dbReference type="ChEBI" id="CHEBI:78442"/>
        <dbReference type="ChEBI" id="CHEBI:78529"/>
        <dbReference type="ChEBI" id="CHEBI:456215"/>
        <dbReference type="EC" id="6.1.1.6"/>
    </reaction>
</comment>
<comment type="cofactor">
    <cofactor evidence="1">
        <name>Mg(2+)</name>
        <dbReference type="ChEBI" id="CHEBI:18420"/>
    </cofactor>
    <text evidence="1">Binds 3 Mg(2+) ions per subunit.</text>
</comment>
<comment type="subunit">
    <text evidence="1">Homodimer.</text>
</comment>
<comment type="subcellular location">
    <subcellularLocation>
        <location evidence="1">Cytoplasm</location>
    </subcellularLocation>
</comment>
<comment type="similarity">
    <text evidence="1">Belongs to the class-II aminoacyl-tRNA synthetase family.</text>
</comment>
<proteinExistence type="inferred from homology"/>
<gene>
    <name evidence="1" type="primary">lysS</name>
    <name type="ordered locus">CbuG_1581</name>
</gene>
<reference key="1">
    <citation type="journal article" date="2009" name="Infect. Immun.">
        <title>Comparative genomics reveal extensive transposon-mediated genomic plasticity and diversity among potential effector proteins within the genus Coxiella.</title>
        <authorList>
            <person name="Beare P.A."/>
            <person name="Unsworth N."/>
            <person name="Andoh M."/>
            <person name="Voth D.E."/>
            <person name="Omsland A."/>
            <person name="Gilk S.D."/>
            <person name="Williams K.P."/>
            <person name="Sobral B.W."/>
            <person name="Kupko J.J. III"/>
            <person name="Porcella S.F."/>
            <person name="Samuel J.E."/>
            <person name="Heinzen R.A."/>
        </authorList>
    </citation>
    <scope>NUCLEOTIDE SEQUENCE [LARGE SCALE GENOMIC DNA]</scope>
    <source>
        <strain>CbuG_Q212</strain>
    </source>
</reference>
<keyword id="KW-0030">Aminoacyl-tRNA synthetase</keyword>
<keyword id="KW-0067">ATP-binding</keyword>
<keyword id="KW-0963">Cytoplasm</keyword>
<keyword id="KW-0436">Ligase</keyword>
<keyword id="KW-0460">Magnesium</keyword>
<keyword id="KW-0479">Metal-binding</keyword>
<keyword id="KW-0547">Nucleotide-binding</keyword>
<keyword id="KW-0648">Protein biosynthesis</keyword>
<evidence type="ECO:0000255" key="1">
    <source>
        <dbReference type="HAMAP-Rule" id="MF_00252"/>
    </source>
</evidence>
<dbReference type="EC" id="6.1.1.6" evidence="1"/>
<dbReference type="EMBL" id="CP001019">
    <property type="protein sequence ID" value="ACJ18874.1"/>
    <property type="molecule type" value="Genomic_DNA"/>
</dbReference>
<dbReference type="RefSeq" id="WP_005771651.1">
    <property type="nucleotide sequence ID" value="NC_011527.1"/>
</dbReference>
<dbReference type="SMR" id="B6J1P6"/>
<dbReference type="KEGG" id="cbg:CbuG_1581"/>
<dbReference type="HOGENOM" id="CLU_008255_6_0_6"/>
<dbReference type="GO" id="GO:0005829">
    <property type="term" value="C:cytosol"/>
    <property type="evidence" value="ECO:0007669"/>
    <property type="project" value="TreeGrafter"/>
</dbReference>
<dbReference type="GO" id="GO:0005524">
    <property type="term" value="F:ATP binding"/>
    <property type="evidence" value="ECO:0007669"/>
    <property type="project" value="UniProtKB-UniRule"/>
</dbReference>
<dbReference type="GO" id="GO:0004824">
    <property type="term" value="F:lysine-tRNA ligase activity"/>
    <property type="evidence" value="ECO:0007669"/>
    <property type="project" value="UniProtKB-UniRule"/>
</dbReference>
<dbReference type="GO" id="GO:0000287">
    <property type="term" value="F:magnesium ion binding"/>
    <property type="evidence" value="ECO:0007669"/>
    <property type="project" value="UniProtKB-UniRule"/>
</dbReference>
<dbReference type="GO" id="GO:0000049">
    <property type="term" value="F:tRNA binding"/>
    <property type="evidence" value="ECO:0007669"/>
    <property type="project" value="TreeGrafter"/>
</dbReference>
<dbReference type="GO" id="GO:0006430">
    <property type="term" value="P:lysyl-tRNA aminoacylation"/>
    <property type="evidence" value="ECO:0007669"/>
    <property type="project" value="UniProtKB-UniRule"/>
</dbReference>
<dbReference type="CDD" id="cd00775">
    <property type="entry name" value="LysRS_core"/>
    <property type="match status" value="1"/>
</dbReference>
<dbReference type="CDD" id="cd04322">
    <property type="entry name" value="LysRS_N"/>
    <property type="match status" value="1"/>
</dbReference>
<dbReference type="FunFam" id="2.40.50.140:FF:000024">
    <property type="entry name" value="Lysine--tRNA ligase"/>
    <property type="match status" value="1"/>
</dbReference>
<dbReference type="FunFam" id="3.30.930.10:FF:000001">
    <property type="entry name" value="Lysine--tRNA ligase"/>
    <property type="match status" value="1"/>
</dbReference>
<dbReference type="Gene3D" id="3.30.930.10">
    <property type="entry name" value="Bira Bifunctional Protein, Domain 2"/>
    <property type="match status" value="1"/>
</dbReference>
<dbReference type="Gene3D" id="2.40.50.140">
    <property type="entry name" value="Nucleic acid-binding proteins"/>
    <property type="match status" value="1"/>
</dbReference>
<dbReference type="HAMAP" id="MF_00252">
    <property type="entry name" value="Lys_tRNA_synth_class2"/>
    <property type="match status" value="1"/>
</dbReference>
<dbReference type="InterPro" id="IPR004364">
    <property type="entry name" value="Aa-tRNA-synt_II"/>
</dbReference>
<dbReference type="InterPro" id="IPR006195">
    <property type="entry name" value="aa-tRNA-synth_II"/>
</dbReference>
<dbReference type="InterPro" id="IPR045864">
    <property type="entry name" value="aa-tRNA-synth_II/BPL/LPL"/>
</dbReference>
<dbReference type="InterPro" id="IPR002313">
    <property type="entry name" value="Lys-tRNA-ligase_II"/>
</dbReference>
<dbReference type="InterPro" id="IPR044136">
    <property type="entry name" value="Lys-tRNA-ligase_II_N"/>
</dbReference>
<dbReference type="InterPro" id="IPR018149">
    <property type="entry name" value="Lys-tRNA-synth_II_C"/>
</dbReference>
<dbReference type="InterPro" id="IPR012340">
    <property type="entry name" value="NA-bd_OB-fold"/>
</dbReference>
<dbReference type="InterPro" id="IPR004365">
    <property type="entry name" value="NA-bd_OB_tRNA"/>
</dbReference>
<dbReference type="NCBIfam" id="TIGR00499">
    <property type="entry name" value="lysS_bact"/>
    <property type="match status" value="1"/>
</dbReference>
<dbReference type="NCBIfam" id="NF001756">
    <property type="entry name" value="PRK00484.1"/>
    <property type="match status" value="1"/>
</dbReference>
<dbReference type="PANTHER" id="PTHR42918:SF15">
    <property type="entry name" value="LYSINE--TRNA LIGASE, CHLOROPLASTIC_MITOCHONDRIAL"/>
    <property type="match status" value="1"/>
</dbReference>
<dbReference type="PANTHER" id="PTHR42918">
    <property type="entry name" value="LYSYL-TRNA SYNTHETASE"/>
    <property type="match status" value="1"/>
</dbReference>
<dbReference type="Pfam" id="PF00152">
    <property type="entry name" value="tRNA-synt_2"/>
    <property type="match status" value="1"/>
</dbReference>
<dbReference type="Pfam" id="PF01336">
    <property type="entry name" value="tRNA_anti-codon"/>
    <property type="match status" value="1"/>
</dbReference>
<dbReference type="PRINTS" id="PR00982">
    <property type="entry name" value="TRNASYNTHLYS"/>
</dbReference>
<dbReference type="SUPFAM" id="SSF55681">
    <property type="entry name" value="Class II aaRS and biotin synthetases"/>
    <property type="match status" value="1"/>
</dbReference>
<dbReference type="SUPFAM" id="SSF50249">
    <property type="entry name" value="Nucleic acid-binding proteins"/>
    <property type="match status" value="1"/>
</dbReference>
<dbReference type="PROSITE" id="PS50862">
    <property type="entry name" value="AA_TRNA_LIGASE_II"/>
    <property type="match status" value="1"/>
</dbReference>